<organism>
    <name type="scientific">Streptococcus pyogenes serotype M12 (strain MGAS9429)</name>
    <dbReference type="NCBI Taxonomy" id="370551"/>
    <lineage>
        <taxon>Bacteria</taxon>
        <taxon>Bacillati</taxon>
        <taxon>Bacillota</taxon>
        <taxon>Bacilli</taxon>
        <taxon>Lactobacillales</taxon>
        <taxon>Streptococcaceae</taxon>
        <taxon>Streptococcus</taxon>
    </lineage>
</organism>
<protein>
    <recommendedName>
        <fullName evidence="1">Glutamate 5-kinase</fullName>
        <ecNumber evidence="1">2.7.2.11</ecNumber>
    </recommendedName>
    <alternativeName>
        <fullName evidence="1">Gamma-glutamyl kinase</fullName>
        <shortName evidence="1">GK</shortName>
    </alternativeName>
</protein>
<name>PROB_STRPC</name>
<accession>Q1JKL3</accession>
<gene>
    <name evidence="1" type="primary">proB</name>
    <name type="ordered locus">MGAS9429_Spy1369</name>
</gene>
<dbReference type="EC" id="2.7.2.11" evidence="1"/>
<dbReference type="EMBL" id="CP000259">
    <property type="protein sequence ID" value="ABF32556.1"/>
    <property type="molecule type" value="Genomic_DNA"/>
</dbReference>
<dbReference type="SMR" id="Q1JKL3"/>
<dbReference type="KEGG" id="spk:MGAS9429_Spy1369"/>
<dbReference type="HOGENOM" id="CLU_025400_0_2_9"/>
<dbReference type="UniPathway" id="UPA00098">
    <property type="reaction ID" value="UER00359"/>
</dbReference>
<dbReference type="Proteomes" id="UP000002433">
    <property type="component" value="Chromosome"/>
</dbReference>
<dbReference type="GO" id="GO:0005829">
    <property type="term" value="C:cytosol"/>
    <property type="evidence" value="ECO:0007669"/>
    <property type="project" value="TreeGrafter"/>
</dbReference>
<dbReference type="GO" id="GO:0005524">
    <property type="term" value="F:ATP binding"/>
    <property type="evidence" value="ECO:0007669"/>
    <property type="project" value="UniProtKB-KW"/>
</dbReference>
<dbReference type="GO" id="GO:0004349">
    <property type="term" value="F:glutamate 5-kinase activity"/>
    <property type="evidence" value="ECO:0007669"/>
    <property type="project" value="UniProtKB-UniRule"/>
</dbReference>
<dbReference type="GO" id="GO:0055129">
    <property type="term" value="P:L-proline biosynthetic process"/>
    <property type="evidence" value="ECO:0007669"/>
    <property type="project" value="UniProtKB-UniRule"/>
</dbReference>
<dbReference type="CDD" id="cd04242">
    <property type="entry name" value="AAK_G5K_ProB"/>
    <property type="match status" value="1"/>
</dbReference>
<dbReference type="FunFam" id="3.40.1160.10:FF:000006">
    <property type="entry name" value="Glutamate 5-kinase"/>
    <property type="match status" value="1"/>
</dbReference>
<dbReference type="Gene3D" id="3.40.1160.10">
    <property type="entry name" value="Acetylglutamate kinase-like"/>
    <property type="match status" value="1"/>
</dbReference>
<dbReference type="HAMAP" id="MF_00456">
    <property type="entry name" value="ProB"/>
    <property type="match status" value="1"/>
</dbReference>
<dbReference type="InterPro" id="IPR036393">
    <property type="entry name" value="AceGlu_kinase-like_sf"/>
</dbReference>
<dbReference type="InterPro" id="IPR001048">
    <property type="entry name" value="Asp/Glu/Uridylate_kinase"/>
</dbReference>
<dbReference type="InterPro" id="IPR041739">
    <property type="entry name" value="G5K_ProB"/>
</dbReference>
<dbReference type="InterPro" id="IPR001057">
    <property type="entry name" value="Glu/AcGlu_kinase"/>
</dbReference>
<dbReference type="InterPro" id="IPR011529">
    <property type="entry name" value="Glu_5kinase"/>
</dbReference>
<dbReference type="InterPro" id="IPR005715">
    <property type="entry name" value="Glu_5kinase/COase_Synthase"/>
</dbReference>
<dbReference type="InterPro" id="IPR019797">
    <property type="entry name" value="Glutamate_5-kinase_CS"/>
</dbReference>
<dbReference type="NCBIfam" id="TIGR01027">
    <property type="entry name" value="proB"/>
    <property type="match status" value="1"/>
</dbReference>
<dbReference type="PANTHER" id="PTHR43654">
    <property type="entry name" value="GLUTAMATE 5-KINASE"/>
    <property type="match status" value="1"/>
</dbReference>
<dbReference type="PANTHER" id="PTHR43654:SF1">
    <property type="entry name" value="ISOPENTENYL PHOSPHATE KINASE"/>
    <property type="match status" value="1"/>
</dbReference>
<dbReference type="Pfam" id="PF00696">
    <property type="entry name" value="AA_kinase"/>
    <property type="match status" value="1"/>
</dbReference>
<dbReference type="PIRSF" id="PIRSF000729">
    <property type="entry name" value="GK"/>
    <property type="match status" value="1"/>
</dbReference>
<dbReference type="PRINTS" id="PR00474">
    <property type="entry name" value="GLU5KINASE"/>
</dbReference>
<dbReference type="SUPFAM" id="SSF53633">
    <property type="entry name" value="Carbamate kinase-like"/>
    <property type="match status" value="1"/>
</dbReference>
<dbReference type="PROSITE" id="PS00902">
    <property type="entry name" value="GLUTAMATE_5_KINASE"/>
    <property type="match status" value="1"/>
</dbReference>
<evidence type="ECO:0000255" key="1">
    <source>
        <dbReference type="HAMAP-Rule" id="MF_00456"/>
    </source>
</evidence>
<proteinExistence type="inferred from homology"/>
<keyword id="KW-0028">Amino-acid biosynthesis</keyword>
<keyword id="KW-0067">ATP-binding</keyword>
<keyword id="KW-0963">Cytoplasm</keyword>
<keyword id="KW-0418">Kinase</keyword>
<keyword id="KW-0547">Nucleotide-binding</keyword>
<keyword id="KW-0641">Proline biosynthesis</keyword>
<keyword id="KW-0808">Transferase</keyword>
<comment type="function">
    <text evidence="1">Catalyzes the transfer of a phosphate group to glutamate to form L-glutamate 5-phosphate.</text>
</comment>
<comment type="catalytic activity">
    <reaction evidence="1">
        <text>L-glutamate + ATP = L-glutamyl 5-phosphate + ADP</text>
        <dbReference type="Rhea" id="RHEA:14877"/>
        <dbReference type="ChEBI" id="CHEBI:29985"/>
        <dbReference type="ChEBI" id="CHEBI:30616"/>
        <dbReference type="ChEBI" id="CHEBI:58274"/>
        <dbReference type="ChEBI" id="CHEBI:456216"/>
        <dbReference type="EC" id="2.7.2.11"/>
    </reaction>
</comment>
<comment type="pathway">
    <text evidence="1">Amino-acid biosynthesis; L-proline biosynthesis; L-glutamate 5-semialdehyde from L-glutamate: step 1/2.</text>
</comment>
<comment type="subcellular location">
    <subcellularLocation>
        <location evidence="1">Cytoplasm</location>
    </subcellularLocation>
</comment>
<comment type="similarity">
    <text evidence="1">Belongs to the glutamate 5-kinase family.</text>
</comment>
<feature type="chain" id="PRO_0000253005" description="Glutamate 5-kinase">
    <location>
        <begin position="1"/>
        <end position="275"/>
    </location>
</feature>
<feature type="binding site" evidence="1">
    <location>
        <position position="17"/>
    </location>
    <ligand>
        <name>ATP</name>
        <dbReference type="ChEBI" id="CHEBI:30616"/>
    </ligand>
</feature>
<feature type="binding site" evidence="1">
    <location>
        <position position="57"/>
    </location>
    <ligand>
        <name>substrate</name>
    </ligand>
</feature>
<feature type="binding site" evidence="1">
    <location>
        <position position="144"/>
    </location>
    <ligand>
        <name>substrate</name>
    </ligand>
</feature>
<feature type="binding site" evidence="1">
    <location>
        <position position="160"/>
    </location>
    <ligand>
        <name>substrate</name>
    </ligand>
</feature>
<feature type="binding site" evidence="1">
    <location>
        <begin position="180"/>
        <end position="181"/>
    </location>
    <ligand>
        <name>ATP</name>
        <dbReference type="ChEBI" id="CHEBI:30616"/>
    </ligand>
</feature>
<feature type="binding site" evidence="1">
    <location>
        <begin position="222"/>
        <end position="228"/>
    </location>
    <ligand>
        <name>ATP</name>
        <dbReference type="ChEBI" id="CHEBI:30616"/>
    </ligand>
</feature>
<sequence length="275" mass="29863">MGMMKRQFEDVTRIVIKIGTSSLVLPTGKINLEKIDQLAFVISSLMNKGKEVILVSSGAMGFGLDILKMEKRPTNLAKQQAVSSVGQVAMMSLYSQIFAHYQTNVSQILLTRDVVVFPESLANVTNAFESLISLGIVPIVNENDAVSVDEMDHATKFGDNDRLSAVVAGITKADLLIMLSDIDGLFDKNPTIYEDAQLRSHVAVITQEIIASAGGAGSKFGTGGMLSKIQSAQMVFENKGQMVLMNGANPRDILRVLEGQPLGTWFKQIEEVTHD</sequence>
<reference key="1">
    <citation type="journal article" date="2006" name="Proc. Natl. Acad. Sci. U.S.A.">
        <title>Molecular genetic anatomy of inter- and intraserotype variation in the human bacterial pathogen group A Streptococcus.</title>
        <authorList>
            <person name="Beres S.B."/>
            <person name="Richter E.W."/>
            <person name="Nagiec M.J."/>
            <person name="Sumby P."/>
            <person name="Porcella S.F."/>
            <person name="DeLeo F.R."/>
            <person name="Musser J.M."/>
        </authorList>
    </citation>
    <scope>NUCLEOTIDE SEQUENCE [LARGE SCALE GENOMIC DNA]</scope>
    <source>
        <strain>MGAS9429</strain>
    </source>
</reference>